<keyword id="KW-0025">Alternative splicing</keyword>
<keyword id="KW-1015">Disulfide bond</keyword>
<keyword id="KW-0325">Glycoprotein</keyword>
<keyword id="KW-1032">Host cell membrane</keyword>
<keyword id="KW-1043">Host membrane</keyword>
<keyword id="KW-0945">Host-virus interaction</keyword>
<keyword id="KW-0375">Hydrogen ion transport</keyword>
<keyword id="KW-1083">Inhibition of host autophagy by virus</keyword>
<keyword id="KW-0407">Ion channel</keyword>
<keyword id="KW-0406">Ion transport</keyword>
<keyword id="KW-0449">Lipoprotein</keyword>
<keyword id="KW-0472">Membrane</keyword>
<keyword id="KW-0564">Palmitate</keyword>
<keyword id="KW-0597">Phosphoprotein</keyword>
<keyword id="KW-0735">Signal-anchor</keyword>
<keyword id="KW-0812">Transmembrane</keyword>
<keyword id="KW-1133">Transmembrane helix</keyword>
<keyword id="KW-0813">Transport</keyword>
<keyword id="KW-1182">Viral ion channel</keyword>
<keyword id="KW-0946">Virion</keyword>
<name>M2_I37A0</name>
<comment type="function">
    <text evidence="1">Forms a proton-selective ion channel that is necessary for the efficient release of the viral genome during virus entry. After attaching to the cell surface, the virion enters the cell by endocytosis. Acidification of the endosome triggers M2 ion channel activity. The influx of protons into virion interior is believed to disrupt interactions between the viral ribonucleoprotein (RNP), matrix protein 1 (M1), and lipid bilayers, thereby freeing the viral genome from interaction with viral proteins and enabling RNA segments to migrate to the host cell nucleus, where influenza virus RNA transcription and replication occur. Also plays a role in viral proteins secretory pathway. Elevates the intravesicular pH of normally acidic compartments, such as trans-Golgi network, preventing newly formed hemagglutinin from premature switching to the fusion-active conformation.</text>
</comment>
<comment type="activity regulation">
    <text>The M2 protein from most influenza A strains is inhibited by amantadine and rimantadine, resulting in viral uncoating incapacity. Emergence of amantadine-resistant variants is usually rapid.</text>
</comment>
<comment type="subunit">
    <text evidence="1">Homotetramer; composed of two disulfide-linked dimers held together by non-covalent interactions. May interact with matrix protein 1.</text>
</comment>
<comment type="subcellular location">
    <subcellularLocation>
        <location evidence="1">Virion membrane</location>
    </subcellularLocation>
    <subcellularLocation>
        <location evidence="1">Host apical cell membrane</location>
        <topology evidence="1">Single-pass type III membrane protein</topology>
    </subcellularLocation>
    <text evidence="1">Abundantly expressed at the apical plasma membrane in infected polarized epithelial cells, in close proximity to budding and assembled virions. Minor component of virions (only 16-20 molecules/virion).</text>
</comment>
<comment type="alternative products">
    <event type="alternative splicing"/>
    <isoform>
        <id>Q67206-1</id>
        <name>M2</name>
        <sequence type="displayed"/>
    </isoform>
    <isoform>
        <id>Q76V10-1</id>
        <name>M1</name>
        <sequence type="external"/>
    </isoform>
    <text>Only the first 9 residues are shared by the 2 isoforms.</text>
</comment>
<comment type="domain">
    <text evidence="1">Cytoplasmic tail plays an important role in virion assembly and morphogenesis.</text>
</comment>
<comment type="miscellaneous">
    <text evidence="1">When the channel is activated, one or more imidazole moieties of His-37 probably become bi-protonated.</text>
</comment>
<comment type="similarity">
    <text evidence="1">Belongs to the influenza viruses matrix protein M2 family.</text>
</comment>
<feature type="chain" id="PRO_0000326335" description="Matrix protein 2">
    <location>
        <begin position="1"/>
        <end position="97"/>
    </location>
</feature>
<feature type="topological domain" description="Virion surface" evidence="1">
    <location>
        <begin position="1"/>
        <end position="22"/>
    </location>
</feature>
<feature type="transmembrane region" description="Helical; Signal-anchor for type III membrane protein" evidence="1">
    <location>
        <begin position="23"/>
        <end position="43"/>
    </location>
</feature>
<feature type="topological domain" description="Intravirion" evidence="1">
    <location>
        <begin position="44"/>
        <end position="97"/>
    </location>
</feature>
<feature type="region of interest" description="Disordered" evidence="2">
    <location>
        <begin position="61"/>
        <end position="84"/>
    </location>
</feature>
<feature type="site" description="Essential for channel activity, possibly by being protonated during channel activation, and by forming the channel gate and the selective filter" evidence="1">
    <location>
        <position position="37"/>
    </location>
</feature>
<feature type="site" description="Seems to be involved in pH gating" evidence="1">
    <location>
        <position position="41"/>
    </location>
</feature>
<feature type="modified residue" description="Phosphoserine; by host" evidence="1">
    <location>
        <position position="64"/>
    </location>
</feature>
<feature type="modified residue" description="Phosphoserine; by host" evidence="1">
    <location>
        <position position="82"/>
    </location>
</feature>
<feature type="lipid moiety-binding region" description="S-palmitoyl cysteine; by host" evidence="1">
    <location>
        <position position="50"/>
    </location>
</feature>
<feature type="glycosylation site" description="N-linked (GlcNAc...) asparagine; by host" evidence="1">
    <location>
        <position position="20"/>
    </location>
</feature>
<feature type="disulfide bond" description="Interchain (with C-17)" evidence="1">
    <location>
        <position position="17"/>
    </location>
</feature>
<feature type="disulfide bond" description="Interchain (with C-19)" evidence="1">
    <location>
        <position position="19"/>
    </location>
</feature>
<sequence length="97" mass="11183">MSLLTEVETPIRNEWGCRCNDSSDPLVAAASIIGILHLILWILDRLFFKCIYRRLEYGLKRGPSTEGVPESMREEYRQKQQSAVDVDDGHFVNIELE</sequence>
<evidence type="ECO:0000255" key="1">
    <source>
        <dbReference type="HAMAP-Rule" id="MF_04069"/>
    </source>
</evidence>
<evidence type="ECO:0000256" key="2">
    <source>
        <dbReference type="SAM" id="MobiDB-lite"/>
    </source>
</evidence>
<organism>
    <name type="scientific">Influenza A virus (strain A/Swine/29/1937 H1N1)</name>
    <dbReference type="NCBI Taxonomy" id="382842"/>
    <lineage>
        <taxon>Viruses</taxon>
        <taxon>Riboviria</taxon>
        <taxon>Orthornavirae</taxon>
        <taxon>Negarnaviricota</taxon>
        <taxon>Polyploviricotina</taxon>
        <taxon>Insthoviricetes</taxon>
        <taxon>Articulavirales</taxon>
        <taxon>Orthomyxoviridae</taxon>
        <taxon>Alphainfluenzavirus</taxon>
        <taxon>Alphainfluenzavirus influenzae</taxon>
        <taxon>Influenza A virus</taxon>
    </lineage>
</organism>
<protein>
    <recommendedName>
        <fullName evidence="1">Matrix protein 2</fullName>
    </recommendedName>
    <alternativeName>
        <fullName evidence="1">Proton channel protein M2</fullName>
    </alternativeName>
</protein>
<gene>
    <name evidence="1" type="primary">M</name>
</gene>
<accession>Q67206</accession>
<organismHost>
    <name type="scientific">Aves</name>
    <dbReference type="NCBI Taxonomy" id="8782"/>
</organismHost>
<organismHost>
    <name type="scientific">Homo sapiens</name>
    <name type="common">Human</name>
    <dbReference type="NCBI Taxonomy" id="9606"/>
</organismHost>
<organismHost>
    <name type="scientific">Sus scrofa</name>
    <name type="common">Pig</name>
    <dbReference type="NCBI Taxonomy" id="9823"/>
</organismHost>
<reference key="1">
    <citation type="journal article" date="1991" name="J. Virol.">
        <title>Evolutionary analysis of the influenza A virus M gene with comparison of the M1 and M2 proteins.</title>
        <authorList>
            <person name="Ito T."/>
            <person name="Gorman O.T."/>
            <person name="Kawaoka Y."/>
            <person name="Bean W.J."/>
            <person name="Webster R.G."/>
        </authorList>
    </citation>
    <scope>NUCLEOTIDE SEQUENCE [GENOMIC RNA]</scope>
</reference>
<proteinExistence type="inferred from homology"/>
<dbReference type="EMBL" id="M63517">
    <property type="protein sequence ID" value="AAA43341.1"/>
    <property type="molecule type" value="Genomic_RNA"/>
</dbReference>
<dbReference type="SMR" id="Q67206"/>
<dbReference type="GlyCosmos" id="Q67206">
    <property type="glycosylation" value="1 site, No reported glycans"/>
</dbReference>
<dbReference type="GO" id="GO:0020002">
    <property type="term" value="C:host cell plasma membrane"/>
    <property type="evidence" value="ECO:0007669"/>
    <property type="project" value="UniProtKB-SubCell"/>
</dbReference>
<dbReference type="GO" id="GO:0016020">
    <property type="term" value="C:membrane"/>
    <property type="evidence" value="ECO:0007669"/>
    <property type="project" value="UniProtKB-UniRule"/>
</dbReference>
<dbReference type="GO" id="GO:0055036">
    <property type="term" value="C:virion membrane"/>
    <property type="evidence" value="ECO:0007669"/>
    <property type="project" value="UniProtKB-SubCell"/>
</dbReference>
<dbReference type="GO" id="GO:0005216">
    <property type="term" value="F:monoatomic ion channel activity"/>
    <property type="evidence" value="ECO:0007669"/>
    <property type="project" value="UniProtKB-UniRule"/>
</dbReference>
<dbReference type="GO" id="GO:0015078">
    <property type="term" value="F:proton transmembrane transporter activity"/>
    <property type="evidence" value="ECO:0007669"/>
    <property type="project" value="UniProtKB-UniRule"/>
</dbReference>
<dbReference type="GO" id="GO:0051259">
    <property type="term" value="P:protein complex oligomerization"/>
    <property type="evidence" value="ECO:0007669"/>
    <property type="project" value="UniProtKB-UniRule"/>
</dbReference>
<dbReference type="GO" id="GO:0044694">
    <property type="term" value="P:symbiont genome entry into host cell via pore formation in plasma membrane"/>
    <property type="evidence" value="ECO:0007669"/>
    <property type="project" value="UniProtKB-UniRule"/>
</dbReference>
<dbReference type="GO" id="GO:0140321">
    <property type="term" value="P:symbiont-mediated suppression of host autophagy"/>
    <property type="evidence" value="ECO:0007669"/>
    <property type="project" value="UniProtKB-KW"/>
</dbReference>
<dbReference type="Gene3D" id="6.10.250.1640">
    <property type="match status" value="1"/>
</dbReference>
<dbReference type="HAMAP" id="MF_04069">
    <property type="entry name" value="INFV_M2"/>
    <property type="match status" value="1"/>
</dbReference>
<dbReference type="InterPro" id="IPR002089">
    <property type="entry name" value="Flu_M2"/>
</dbReference>
<dbReference type="Pfam" id="PF00599">
    <property type="entry name" value="Flu_M2"/>
    <property type="match status" value="1"/>
</dbReference>